<proteinExistence type="inferred from homology"/>
<protein>
    <recommendedName>
        <fullName evidence="2">Adenylyltransferase and sulfurtransferase MOCS3</fullName>
    </recommendedName>
    <alternativeName>
        <fullName evidence="2">Molybdenum cofactor synthesis protein 3</fullName>
    </alternativeName>
    <domain>
        <recommendedName>
            <fullName evidence="2">Molybdopterin-synthase adenylyltransferase</fullName>
            <ecNumber evidence="2">2.7.7.80</ecNumber>
        </recommendedName>
        <alternativeName>
            <fullName evidence="2">Adenylyltransferase MOCS3</fullName>
        </alternativeName>
        <alternativeName>
            <fullName evidence="2">Sulfur carrier protein MOCS2A adenylyltransferase</fullName>
        </alternativeName>
    </domain>
    <domain>
        <recommendedName>
            <fullName evidence="2">Molybdopterin-synthase sulfurtransferase</fullName>
            <ecNumber evidence="2">2.8.1.11</ecNumber>
        </recommendedName>
        <alternativeName>
            <fullName evidence="2">Sulfur carrier protein MOCS2A sulfurtransferase</fullName>
        </alternativeName>
        <alternativeName>
            <fullName evidence="2">Sulfurtransferase MOCS3</fullName>
        </alternativeName>
    </domain>
</protein>
<evidence type="ECO:0000250" key="1">
    <source>
        <dbReference type="UniProtKB" id="O95396"/>
    </source>
</evidence>
<evidence type="ECO:0000255" key="2">
    <source>
        <dbReference type="HAMAP-Rule" id="MF_03049"/>
    </source>
</evidence>
<feature type="chain" id="PRO_0000369194" description="Adenylyltransferase and sulfurtransferase MOCS3">
    <location>
        <begin position="1"/>
        <end position="455"/>
    </location>
</feature>
<feature type="domain" description="Rhodanese" evidence="2">
    <location>
        <begin position="345"/>
        <end position="453"/>
    </location>
</feature>
<feature type="region of interest" description="Interaction with NFS1" evidence="1">
    <location>
        <begin position="156"/>
        <end position="236"/>
    </location>
</feature>
<feature type="active site" description="Glycyl thioester intermediate; for adenylyltransferase activity" evidence="2">
    <location>
        <position position="237"/>
    </location>
</feature>
<feature type="active site" description="Cysteine persulfide intermediate; for sulfurtransferase activity" evidence="2">
    <location>
        <position position="410"/>
    </location>
</feature>
<feature type="binding site" evidence="2">
    <location>
        <position position="90"/>
    </location>
    <ligand>
        <name>ATP</name>
        <dbReference type="ChEBI" id="CHEBI:30616"/>
    </ligand>
</feature>
<feature type="binding site" evidence="2">
    <location>
        <position position="111"/>
    </location>
    <ligand>
        <name>ATP</name>
        <dbReference type="ChEBI" id="CHEBI:30616"/>
    </ligand>
</feature>
<feature type="binding site" evidence="2">
    <location>
        <begin position="118"/>
        <end position="122"/>
    </location>
    <ligand>
        <name>ATP</name>
        <dbReference type="ChEBI" id="CHEBI:30616"/>
    </ligand>
</feature>
<feature type="binding site" evidence="2">
    <location>
        <position position="135"/>
    </location>
    <ligand>
        <name>ATP</name>
        <dbReference type="ChEBI" id="CHEBI:30616"/>
    </ligand>
</feature>
<feature type="binding site" evidence="2">
    <location>
        <begin position="179"/>
        <end position="180"/>
    </location>
    <ligand>
        <name>ATP</name>
        <dbReference type="ChEBI" id="CHEBI:30616"/>
    </ligand>
</feature>
<feature type="binding site" evidence="2">
    <location>
        <position position="220"/>
    </location>
    <ligand>
        <name>Zn(2+)</name>
        <dbReference type="ChEBI" id="CHEBI:29105"/>
    </ligand>
</feature>
<feature type="binding site" evidence="2">
    <location>
        <position position="223"/>
    </location>
    <ligand>
        <name>Zn(2+)</name>
        <dbReference type="ChEBI" id="CHEBI:29105"/>
    </ligand>
</feature>
<feature type="binding site" evidence="2">
    <location>
        <position position="295"/>
    </location>
    <ligand>
        <name>Zn(2+)</name>
        <dbReference type="ChEBI" id="CHEBI:29105"/>
    </ligand>
</feature>
<feature type="binding site" evidence="2">
    <location>
        <position position="298"/>
    </location>
    <ligand>
        <name>Zn(2+)</name>
        <dbReference type="ChEBI" id="CHEBI:29105"/>
    </ligand>
</feature>
<feature type="modified residue" description="Cysteine persulfide" evidence="1">
    <location>
        <position position="410"/>
    </location>
</feature>
<feature type="disulfide bond" description="Alternate" evidence="2">
    <location>
        <begin position="314"/>
        <end position="322"/>
    </location>
</feature>
<dbReference type="EC" id="2.7.7.80" evidence="2"/>
<dbReference type="EC" id="2.8.1.11" evidence="2"/>
<dbReference type="EMBL" id="CR974565">
    <property type="protein sequence ID" value="CAN13125.1"/>
    <property type="molecule type" value="Genomic_DNA"/>
</dbReference>
<dbReference type="RefSeq" id="NP_001095289.1">
    <property type="nucleotide sequence ID" value="NM_001101819.1"/>
</dbReference>
<dbReference type="SMR" id="A5GFZ6"/>
<dbReference type="FunCoup" id="A5GFZ6">
    <property type="interactions" value="914"/>
</dbReference>
<dbReference type="STRING" id="9823.ENSSSCP00000007964"/>
<dbReference type="PaxDb" id="9823-ENSSSCP00000007964"/>
<dbReference type="Ensembl" id="ENSSSCT00000008181.3">
    <property type="protein sequence ID" value="ENSSSCP00000007964.3"/>
    <property type="gene ID" value="ENSSSCG00000007475.3"/>
</dbReference>
<dbReference type="Ensembl" id="ENSSSCT00015000540.1">
    <property type="protein sequence ID" value="ENSSSCP00015000088.1"/>
    <property type="gene ID" value="ENSSSCG00015000484.1"/>
</dbReference>
<dbReference type="Ensembl" id="ENSSSCT00025075782.1">
    <property type="protein sequence ID" value="ENSSSCP00025032850.1"/>
    <property type="gene ID" value="ENSSSCG00025055407.1"/>
</dbReference>
<dbReference type="Ensembl" id="ENSSSCT00030000934.1">
    <property type="protein sequence ID" value="ENSSSCP00030000431.1"/>
    <property type="gene ID" value="ENSSSCG00030000701.1"/>
</dbReference>
<dbReference type="Ensembl" id="ENSSSCT00035043090.1">
    <property type="protein sequence ID" value="ENSSSCP00035017231.1"/>
    <property type="gene ID" value="ENSSSCG00035032535.1"/>
</dbReference>
<dbReference type="Ensembl" id="ENSSSCT00040054693.1">
    <property type="protein sequence ID" value="ENSSSCP00040022726.1"/>
    <property type="gene ID" value="ENSSSCG00040040925.1"/>
</dbReference>
<dbReference type="Ensembl" id="ENSSSCT00045044975.1">
    <property type="protein sequence ID" value="ENSSSCP00045031202.1"/>
    <property type="gene ID" value="ENSSSCG00045026435.1"/>
</dbReference>
<dbReference type="Ensembl" id="ENSSSCT00050080146.1">
    <property type="protein sequence ID" value="ENSSSCP00050034423.1"/>
    <property type="gene ID" value="ENSSSCG00050058821.1"/>
</dbReference>
<dbReference type="Ensembl" id="ENSSSCT00055054141.1">
    <property type="protein sequence ID" value="ENSSSCP00055043212.1"/>
    <property type="gene ID" value="ENSSSCG00055027385.1"/>
</dbReference>
<dbReference type="Ensembl" id="ENSSSCT00060036825.1">
    <property type="protein sequence ID" value="ENSSSCP00060015674.1"/>
    <property type="gene ID" value="ENSSSCG00060027198.1"/>
</dbReference>
<dbReference type="Ensembl" id="ENSSSCT00065094878.1">
    <property type="protein sequence ID" value="ENSSSCP00065041494.1"/>
    <property type="gene ID" value="ENSSSCG00065069118.1"/>
</dbReference>
<dbReference type="Ensembl" id="ENSSSCT00085048792">
    <property type="protein sequence ID" value="ENSSSCP00085034212"/>
    <property type="gene ID" value="ENSSSCG00085025382"/>
</dbReference>
<dbReference type="Ensembl" id="ENSSSCT00090005186">
    <property type="protein sequence ID" value="ENSSSCP00090003248"/>
    <property type="gene ID" value="ENSSSCG00090002995"/>
</dbReference>
<dbReference type="Ensembl" id="ENSSSCT00105029941">
    <property type="protein sequence ID" value="ENSSSCP00105020829"/>
    <property type="gene ID" value="ENSSSCG00105015578"/>
</dbReference>
<dbReference type="Ensembl" id="ENSSSCT00110055627">
    <property type="protein sequence ID" value="ENSSSCP00110038701"/>
    <property type="gene ID" value="ENSSSCG00110029041"/>
</dbReference>
<dbReference type="Ensembl" id="ENSSSCT00115022279">
    <property type="protein sequence ID" value="ENSSSCP00115021111"/>
    <property type="gene ID" value="ENSSSCG00115012913"/>
</dbReference>
<dbReference type="Ensembl" id="ENSSSCT00130029184">
    <property type="protein sequence ID" value="ENSSSCP00130019987"/>
    <property type="gene ID" value="ENSSSCG00130014732"/>
</dbReference>
<dbReference type="GeneID" id="100124378"/>
<dbReference type="KEGG" id="ssc:100124378"/>
<dbReference type="CTD" id="27304"/>
<dbReference type="VGNC" id="VGNC:103989">
    <property type="gene designation" value="MOCS3"/>
</dbReference>
<dbReference type="eggNOG" id="KOG2017">
    <property type="taxonomic scope" value="Eukaryota"/>
</dbReference>
<dbReference type="GeneTree" id="ENSGT00940000160847"/>
<dbReference type="HOGENOM" id="CLU_013325_1_2_1"/>
<dbReference type="InParanoid" id="A5GFZ6"/>
<dbReference type="OrthoDB" id="10261062at2759"/>
<dbReference type="TreeFam" id="TF106103"/>
<dbReference type="Reactome" id="R-SSC-947581">
    <property type="pathway name" value="Molybdenum cofactor biosynthesis"/>
</dbReference>
<dbReference type="UniPathway" id="UPA00344"/>
<dbReference type="UniPathway" id="UPA00988"/>
<dbReference type="Proteomes" id="UP000008227">
    <property type="component" value="Chromosome 17"/>
</dbReference>
<dbReference type="Proteomes" id="UP000314985">
    <property type="component" value="Unplaced"/>
</dbReference>
<dbReference type="Proteomes" id="UP000694570">
    <property type="component" value="Unplaced"/>
</dbReference>
<dbReference type="Proteomes" id="UP000694571">
    <property type="component" value="Unplaced"/>
</dbReference>
<dbReference type="Proteomes" id="UP000694720">
    <property type="component" value="Unplaced"/>
</dbReference>
<dbReference type="Proteomes" id="UP000694722">
    <property type="component" value="Unplaced"/>
</dbReference>
<dbReference type="Proteomes" id="UP000694723">
    <property type="component" value="Unplaced"/>
</dbReference>
<dbReference type="Proteomes" id="UP000694724">
    <property type="component" value="Unplaced"/>
</dbReference>
<dbReference type="Proteomes" id="UP000694725">
    <property type="component" value="Unplaced"/>
</dbReference>
<dbReference type="Proteomes" id="UP000694726">
    <property type="component" value="Unplaced"/>
</dbReference>
<dbReference type="Proteomes" id="UP000694727">
    <property type="component" value="Unplaced"/>
</dbReference>
<dbReference type="Proteomes" id="UP000694728">
    <property type="component" value="Unplaced"/>
</dbReference>
<dbReference type="Bgee" id="ENSSSCG00000007475">
    <property type="expression patterns" value="Expressed in adult mammalian kidney and 46 other cell types or tissues"/>
</dbReference>
<dbReference type="GO" id="GO:0005737">
    <property type="term" value="C:cytoplasm"/>
    <property type="evidence" value="ECO:0000318"/>
    <property type="project" value="GO_Central"/>
</dbReference>
<dbReference type="GO" id="GO:0005829">
    <property type="term" value="C:cytosol"/>
    <property type="evidence" value="ECO:0000250"/>
    <property type="project" value="UniProtKB"/>
</dbReference>
<dbReference type="GO" id="GO:0005524">
    <property type="term" value="F:ATP binding"/>
    <property type="evidence" value="ECO:0007669"/>
    <property type="project" value="UniProtKB-KW"/>
</dbReference>
<dbReference type="GO" id="GO:0046872">
    <property type="term" value="F:metal ion binding"/>
    <property type="evidence" value="ECO:0007669"/>
    <property type="project" value="UniProtKB-KW"/>
</dbReference>
<dbReference type="GO" id="GO:0061605">
    <property type="term" value="F:molybdopterin-synthase adenylyltransferase activity"/>
    <property type="evidence" value="ECO:0007669"/>
    <property type="project" value="UniProtKB-EC"/>
</dbReference>
<dbReference type="GO" id="GO:0061604">
    <property type="term" value="F:molybdopterin-synthase sulfurtransferase activity"/>
    <property type="evidence" value="ECO:0000250"/>
    <property type="project" value="UniProtKB"/>
</dbReference>
<dbReference type="GO" id="GO:0016779">
    <property type="term" value="F:nucleotidyltransferase activity"/>
    <property type="evidence" value="ECO:0000250"/>
    <property type="project" value="UniProtKB"/>
</dbReference>
<dbReference type="GO" id="GO:0016783">
    <property type="term" value="F:sulfurtransferase activity"/>
    <property type="evidence" value="ECO:0000250"/>
    <property type="project" value="UniProtKB"/>
</dbReference>
<dbReference type="GO" id="GO:0004792">
    <property type="term" value="F:thiosulfate-cyanide sulfurtransferase activity"/>
    <property type="evidence" value="ECO:0000318"/>
    <property type="project" value="GO_Central"/>
</dbReference>
<dbReference type="GO" id="GO:0042292">
    <property type="term" value="F:URM1 activating enzyme activity"/>
    <property type="evidence" value="ECO:0000250"/>
    <property type="project" value="UniProtKB"/>
</dbReference>
<dbReference type="GO" id="GO:0006777">
    <property type="term" value="P:Mo-molybdopterin cofactor biosynthetic process"/>
    <property type="evidence" value="ECO:0000250"/>
    <property type="project" value="UniProtKB"/>
</dbReference>
<dbReference type="GO" id="GO:0032447">
    <property type="term" value="P:protein urmylation"/>
    <property type="evidence" value="ECO:0000318"/>
    <property type="project" value="GO_Central"/>
</dbReference>
<dbReference type="GO" id="GO:0034227">
    <property type="term" value="P:tRNA thio-modification"/>
    <property type="evidence" value="ECO:0000250"/>
    <property type="project" value="UniProtKB"/>
</dbReference>
<dbReference type="GO" id="GO:0002143">
    <property type="term" value="P:tRNA wobble position uridine thiolation"/>
    <property type="evidence" value="ECO:0000318"/>
    <property type="project" value="GO_Central"/>
</dbReference>
<dbReference type="GO" id="GO:0002098">
    <property type="term" value="P:tRNA wobble uridine modification"/>
    <property type="evidence" value="ECO:0000250"/>
    <property type="project" value="UniProtKB"/>
</dbReference>
<dbReference type="CDD" id="cd01526">
    <property type="entry name" value="RHOD_ThiF"/>
    <property type="match status" value="1"/>
</dbReference>
<dbReference type="CDD" id="cd00757">
    <property type="entry name" value="ThiF_MoeB_HesA_family"/>
    <property type="match status" value="1"/>
</dbReference>
<dbReference type="FunFam" id="3.40.250.10:FF:000014">
    <property type="entry name" value="Adenylyltransferase and sulfurtransferase MOCS3"/>
    <property type="match status" value="1"/>
</dbReference>
<dbReference type="FunFam" id="3.40.50.720:FF:000206">
    <property type="entry name" value="Adenylyltransferase and sulfurtransferase MOCS3"/>
    <property type="match status" value="1"/>
</dbReference>
<dbReference type="Gene3D" id="3.40.50.720">
    <property type="entry name" value="NAD(P)-binding Rossmann-like Domain"/>
    <property type="match status" value="1"/>
</dbReference>
<dbReference type="Gene3D" id="3.40.250.10">
    <property type="entry name" value="Rhodanese-like domain"/>
    <property type="match status" value="1"/>
</dbReference>
<dbReference type="HAMAP" id="MF_03049">
    <property type="entry name" value="MOCS3_Uba4"/>
    <property type="match status" value="1"/>
</dbReference>
<dbReference type="InterPro" id="IPR028885">
    <property type="entry name" value="MOCS3/Uba4"/>
</dbReference>
<dbReference type="InterPro" id="IPR001763">
    <property type="entry name" value="Rhodanese-like_dom"/>
</dbReference>
<dbReference type="InterPro" id="IPR036873">
    <property type="entry name" value="Rhodanese-like_dom_sf"/>
</dbReference>
<dbReference type="InterPro" id="IPR045886">
    <property type="entry name" value="ThiF/MoeB/HesA"/>
</dbReference>
<dbReference type="InterPro" id="IPR000594">
    <property type="entry name" value="ThiF_NAD_FAD-bd"/>
</dbReference>
<dbReference type="InterPro" id="IPR035985">
    <property type="entry name" value="Ubiquitin-activating_enz"/>
</dbReference>
<dbReference type="NCBIfam" id="NF004281">
    <property type="entry name" value="PRK05690.1"/>
    <property type="match status" value="1"/>
</dbReference>
<dbReference type="PANTHER" id="PTHR10953:SF102">
    <property type="entry name" value="ADENYLYLTRANSFERASE AND SULFURTRANSFERASE MOCS3"/>
    <property type="match status" value="1"/>
</dbReference>
<dbReference type="PANTHER" id="PTHR10953">
    <property type="entry name" value="UBIQUITIN-ACTIVATING ENZYME E1"/>
    <property type="match status" value="1"/>
</dbReference>
<dbReference type="Pfam" id="PF00581">
    <property type="entry name" value="Rhodanese"/>
    <property type="match status" value="1"/>
</dbReference>
<dbReference type="Pfam" id="PF00899">
    <property type="entry name" value="ThiF"/>
    <property type="match status" value="1"/>
</dbReference>
<dbReference type="SMART" id="SM00450">
    <property type="entry name" value="RHOD"/>
    <property type="match status" value="1"/>
</dbReference>
<dbReference type="SUPFAM" id="SSF69572">
    <property type="entry name" value="Activating enzymes of the ubiquitin-like proteins"/>
    <property type="match status" value="1"/>
</dbReference>
<dbReference type="PROSITE" id="PS50206">
    <property type="entry name" value="RHODANESE_3"/>
    <property type="match status" value="1"/>
</dbReference>
<accession>A5GFZ6</accession>
<name>MOCS3_PIG</name>
<keyword id="KW-0067">ATP-binding</keyword>
<keyword id="KW-0963">Cytoplasm</keyword>
<keyword id="KW-1015">Disulfide bond</keyword>
<keyword id="KW-0479">Metal-binding</keyword>
<keyword id="KW-0501">Molybdenum cofactor biosynthesis</keyword>
<keyword id="KW-0511">Multifunctional enzyme</keyword>
<keyword id="KW-0547">Nucleotide-binding</keyword>
<keyword id="KW-0548">Nucleotidyltransferase</keyword>
<keyword id="KW-1185">Reference proteome</keyword>
<keyword id="KW-0808">Transferase</keyword>
<keyword id="KW-0819">tRNA processing</keyword>
<keyword id="KW-0862">Zinc</keyword>
<comment type="function">
    <text evidence="2">Plays a central role in 2-thiolation of mcm(5)S(2)U at tRNA wobble positions of cytosolic tRNA(Lys), tRNA(Glu) and tRNA(Gln). Also essential during biosynthesis of the molybdenum cofactor. Acts by mediating the C-terminal thiocarboxylation of sulfur carriers URM1 and MOCS2A. Its N-terminus first activates URM1 and MOCS2A as acyl-adenylates (-COAMP), then the persulfide sulfur on the catalytic cysteine is transferred to URM1 and MOCS2A to form thiocarboxylation (-COSH) of their C-terminus. The reaction probably involves hydrogen sulfide that is generated from the persulfide intermediate and that acts as a nucleophile towards URM1 and MOCS2A. Subsequently, a transient disulfide bond is formed. Does not use thiosulfate as sulfur donor; NFS1 acting as a sulfur donor for thiocarboxylation reactions.</text>
</comment>
<comment type="catalytic activity">
    <reaction evidence="2">
        <text>[molybdopterin-synthase sulfur-carrier protein]-C-terminal Gly-Gly + ATP + H(+) = [molybdopterin-synthase sulfur-carrier protein]-C-terminal Gly-Gly-AMP + diphosphate</text>
        <dbReference type="Rhea" id="RHEA:43616"/>
        <dbReference type="Rhea" id="RHEA-COMP:12159"/>
        <dbReference type="Rhea" id="RHEA-COMP:12202"/>
        <dbReference type="ChEBI" id="CHEBI:15378"/>
        <dbReference type="ChEBI" id="CHEBI:30616"/>
        <dbReference type="ChEBI" id="CHEBI:33019"/>
        <dbReference type="ChEBI" id="CHEBI:90618"/>
        <dbReference type="ChEBI" id="CHEBI:90778"/>
        <dbReference type="EC" id="2.7.7.80"/>
    </reaction>
</comment>
<comment type="catalytic activity">
    <reaction evidence="2">
        <text>[molybdopterin-synthase sulfur-carrier protein]-C-terminal Gly-Gly-AMP + S-sulfanyl-L-cysteinyl-[cysteine desulfurase] + AH2 = [molybdopterin-synthase sulfur-carrier protein]-C-terminal-Gly-aminoethanethioate + L-cysteinyl-[cysteine desulfurase] + A + AMP + 2 H(+)</text>
        <dbReference type="Rhea" id="RHEA:48612"/>
        <dbReference type="Rhea" id="RHEA-COMP:12157"/>
        <dbReference type="Rhea" id="RHEA-COMP:12158"/>
        <dbReference type="Rhea" id="RHEA-COMP:12159"/>
        <dbReference type="Rhea" id="RHEA-COMP:19907"/>
        <dbReference type="ChEBI" id="CHEBI:13193"/>
        <dbReference type="ChEBI" id="CHEBI:15378"/>
        <dbReference type="ChEBI" id="CHEBI:17499"/>
        <dbReference type="ChEBI" id="CHEBI:29950"/>
        <dbReference type="ChEBI" id="CHEBI:61963"/>
        <dbReference type="ChEBI" id="CHEBI:90618"/>
        <dbReference type="ChEBI" id="CHEBI:232372"/>
        <dbReference type="ChEBI" id="CHEBI:456215"/>
        <dbReference type="EC" id="2.8.1.11"/>
    </reaction>
</comment>
<comment type="cofactor">
    <cofactor evidence="2">
        <name>Zn(2+)</name>
        <dbReference type="ChEBI" id="CHEBI:29105"/>
    </cofactor>
    <text evidence="2">Binds 1 zinc ion per subunit.</text>
</comment>
<comment type="pathway">
    <text evidence="2">tRNA modification; 5-methoxycarbonylmethyl-2-thiouridine-tRNA biosynthesis.</text>
</comment>
<comment type="pathway">
    <text evidence="2">Cofactor biosynthesis; molybdopterin biosynthesis.</text>
</comment>
<comment type="subunit">
    <text evidence="2">Interacts with NFS1.</text>
</comment>
<comment type="subcellular location">
    <subcellularLocation>
        <location evidence="1">Cytoplasm</location>
        <location evidence="1">Cytosol</location>
    </subcellularLocation>
</comment>
<comment type="similarity">
    <text evidence="2">In the N-terminal section; belongs to the HesA/MoeB/ThiF family. UBA4 subfamily.</text>
</comment>
<sequence>MAAREEVLALQAEVARREEELSSLKHRLAAALLAEQESERLLPVSPLPPKAALSQDEILRYSRQLVLPELGVQGQLRLATASVLIVGCGGLGCPLAQYLAAAGVGRLGLVDYDVVEVSNLARQVLHGEALAGQAKVFSAAASLRRLNSAVECVPYAQALTPATALDLVRRYDVVADCSDNVPTRYLVNDACVLAGRPLVSASALRFEGQITVYHYGGGPCYRCVFPQPPPAETVTNCADGGVLGVVTGVLGCLQALEVLKIAAGLGPSYSGSLLLFDALRGLFRRIQLRRRRPDCAACGERPTVTELQDYEGFCGSSATDKCRSLQLLSPEERVSVIDYKRLLDSGSPHLLLDVRPQVEVDICRLPHALHIPLKHLERRDAESLKLLGEAIREGKQGTQEGASLPIYVICKLGNDSQKAVKILQSLPDLDSLLVQDVVGGLMAWAAKVDGTFPQY</sequence>
<gene>
    <name evidence="2" type="primary">MOCS3</name>
    <name evidence="2" type="synonym">UBA4</name>
</gene>
<organism>
    <name type="scientific">Sus scrofa</name>
    <name type="common">Pig</name>
    <dbReference type="NCBI Taxonomy" id="9823"/>
    <lineage>
        <taxon>Eukaryota</taxon>
        <taxon>Metazoa</taxon>
        <taxon>Chordata</taxon>
        <taxon>Craniata</taxon>
        <taxon>Vertebrata</taxon>
        <taxon>Euteleostomi</taxon>
        <taxon>Mammalia</taxon>
        <taxon>Eutheria</taxon>
        <taxon>Laurasiatheria</taxon>
        <taxon>Artiodactyla</taxon>
        <taxon>Suina</taxon>
        <taxon>Suidae</taxon>
        <taxon>Sus</taxon>
    </lineage>
</organism>
<reference key="1">
    <citation type="submission" date="2007-05" db="EMBL/GenBank/DDBJ databases">
        <authorList>
            <consortium name="Porcine genome sequencing project"/>
        </authorList>
    </citation>
    <scope>NUCLEOTIDE SEQUENCE [LARGE SCALE GENOMIC DNA]</scope>
</reference>